<dbReference type="EMBL" id="CP000498">
    <property type="protein sequence ID" value="ABN66113.1"/>
    <property type="molecule type" value="Genomic_DNA"/>
</dbReference>
<dbReference type="RefSeq" id="XP_001384142.1">
    <property type="nucleotide sequence ID" value="XM_001384105.1"/>
</dbReference>
<dbReference type="FunCoup" id="A3LTS5">
    <property type="interactions" value="27"/>
</dbReference>
<dbReference type="STRING" id="322104.A3LTS5"/>
<dbReference type="GeneID" id="4838623"/>
<dbReference type="KEGG" id="pic:PICST_58162"/>
<dbReference type="eggNOG" id="ENOG502S551">
    <property type="taxonomic scope" value="Eukaryota"/>
</dbReference>
<dbReference type="HOGENOM" id="CLU_016851_1_0_1"/>
<dbReference type="InParanoid" id="A3LTS5"/>
<dbReference type="OMA" id="VKRFNHR"/>
<dbReference type="OrthoDB" id="361494at2759"/>
<dbReference type="Proteomes" id="UP000002258">
    <property type="component" value="Chromosome 4"/>
</dbReference>
<dbReference type="GO" id="GO:0051301">
    <property type="term" value="P:cell division"/>
    <property type="evidence" value="ECO:0007669"/>
    <property type="project" value="UniProtKB-KW"/>
</dbReference>
<dbReference type="GO" id="GO:0071555">
    <property type="term" value="P:cell wall organization"/>
    <property type="evidence" value="ECO:0007669"/>
    <property type="project" value="UniProtKB-KW"/>
</dbReference>
<dbReference type="Gene3D" id="2.130.10.10">
    <property type="entry name" value="YVTN repeat-like/Quinoprotein amine dehydrogenase"/>
    <property type="match status" value="1"/>
</dbReference>
<dbReference type="InterPro" id="IPR024977">
    <property type="entry name" value="Apc4-like_WD40_dom"/>
</dbReference>
<dbReference type="InterPro" id="IPR015943">
    <property type="entry name" value="WD40/YVTN_repeat-like_dom_sf"/>
</dbReference>
<dbReference type="InterPro" id="IPR036322">
    <property type="entry name" value="WD40_repeat_dom_sf"/>
</dbReference>
<dbReference type="InterPro" id="IPR001680">
    <property type="entry name" value="WD40_rpt"/>
</dbReference>
<dbReference type="InterPro" id="IPR051179">
    <property type="entry name" value="WD_repeat_multifunction"/>
</dbReference>
<dbReference type="PANTHER" id="PTHR19857:SF21">
    <property type="entry name" value="ANAPHASE-PROMOTING COMPLEX SUBUNIT 4 WD40 DOMAIN-CONTAINING PROTEIN"/>
    <property type="match status" value="1"/>
</dbReference>
<dbReference type="PANTHER" id="PTHR19857">
    <property type="entry name" value="MITOCHONDRIAL DIVISION PROTEIN 1-RELATED"/>
    <property type="match status" value="1"/>
</dbReference>
<dbReference type="Pfam" id="PF12894">
    <property type="entry name" value="ANAPC4_WD40"/>
    <property type="match status" value="1"/>
</dbReference>
<dbReference type="SMART" id="SM00320">
    <property type="entry name" value="WD40"/>
    <property type="match status" value="4"/>
</dbReference>
<dbReference type="SUPFAM" id="SSF50978">
    <property type="entry name" value="WD40 repeat-like"/>
    <property type="match status" value="1"/>
</dbReference>
<dbReference type="PROSITE" id="PS50082">
    <property type="entry name" value="WD_REPEATS_2"/>
    <property type="match status" value="2"/>
</dbReference>
<dbReference type="PROSITE" id="PS50294">
    <property type="entry name" value="WD_REPEATS_REGION"/>
    <property type="match status" value="1"/>
</dbReference>
<proteinExistence type="inferred from homology"/>
<protein>
    <recommendedName>
        <fullName>Protein DSE1</fullName>
    </recommendedName>
    <alternativeName>
        <fullName>Daughter-specific expression protein 1</fullName>
    </alternativeName>
</protein>
<accession>A3LTS5</accession>
<name>DSE1_PICST</name>
<reference key="1">
    <citation type="journal article" date="2007" name="Nat. Biotechnol.">
        <title>Genome sequence of the lignocellulose-bioconverting and xylose-fermenting yeast Pichia stipitis.</title>
        <authorList>
            <person name="Jeffries T.W."/>
            <person name="Grigoriev I.V."/>
            <person name="Grimwood J."/>
            <person name="Laplaza J.M."/>
            <person name="Aerts A."/>
            <person name="Salamov A."/>
            <person name="Schmutz J."/>
            <person name="Lindquist E."/>
            <person name="Dehal P."/>
            <person name="Shapiro H."/>
            <person name="Jin Y.-S."/>
            <person name="Passoth V."/>
            <person name="Richardson P.M."/>
        </authorList>
    </citation>
    <scope>NUCLEOTIDE SEQUENCE [LARGE SCALE GENOMIC DNA]</scope>
    <source>
        <strain>ATCC 58785 / CBS 6054 / NBRC 10063 / NRRL Y-11545</strain>
    </source>
</reference>
<organism>
    <name type="scientific">Scheffersomyces stipitis (strain ATCC 58785 / CBS 6054 / NBRC 10063 / NRRL Y-11545)</name>
    <name type="common">Yeast</name>
    <name type="synonym">Pichia stipitis</name>
    <dbReference type="NCBI Taxonomy" id="322104"/>
    <lineage>
        <taxon>Eukaryota</taxon>
        <taxon>Fungi</taxon>
        <taxon>Dikarya</taxon>
        <taxon>Ascomycota</taxon>
        <taxon>Saccharomycotina</taxon>
        <taxon>Pichiomycetes</taxon>
        <taxon>Debaryomycetaceae</taxon>
        <taxon>Scheffersomyces</taxon>
    </lineage>
</organism>
<comment type="function">
    <text evidence="1">Involved in cell wall metabolism and required for the separation of the mother and daughter cells.</text>
</comment>
<comment type="similarity">
    <text evidence="2">Belongs to the WD repeat DSE1 family.</text>
</comment>
<gene>
    <name type="primary">DSE1</name>
    <name type="ORF">PICST_58162</name>
</gene>
<sequence>MTDYYEPTLLFRQNALRRYCPSLSPISSVETLSSSILTNENIKGNVSSWMFNSANPKDTEVLNQSCSLNRMNIKSNYWKIPDTNMNLTAMAITDTHTDNPLFSVSSANNESNLFIYELDLLGNYLTHHNTISLPNINGMKWLPNSNRHLVTGNSKGYAHLVSIPEVNRTGNEDSEEQSAEICKRFNHRKHIKSKQDINKHSTISKLDFMNNDNSSLLSIYNNNLFYWDMNDAEAQRRPTPISISSISGLANFDPLPTHNANLVGICGKFGVSLFDLRQPKFTVPPSILEYASKKKLGANQMRWNPNNENVFAAAHRDGVVRLWDIRKQDNFANLSGHTDKISSLEWNDGDLFSGSRDGNIVHWDLTSDLSANNQFMNCGLKEGLDSVHFNPHMNRLERAINERQCGTVLPASNTNIISMCSVTGSDNSKDDMKVLSIDGSSFFGVHSKIFDAVNISMTSDKLYYTESDIQLMMKSENSNNTLVGSTDSINEQVTAPLAITRKSTLKDFAQAADAARPSNLSKDTLLGSVEDLKLAPEPIVVDDDDLKITKEIEDDLEDYNDFTFAPPSFIPIQNGNVSTCSHELDSEEDSGISSVESSPLKREASFKFQLLDSLDFEEKKLPRDDSFNTEMFNDLRMARQASVRTIGTHYRNVYNG</sequence>
<keyword id="KW-0131">Cell cycle</keyword>
<keyword id="KW-0132">Cell division</keyword>
<keyword id="KW-0961">Cell wall biogenesis/degradation</keyword>
<keyword id="KW-1185">Reference proteome</keyword>
<keyword id="KW-0677">Repeat</keyword>
<keyword id="KW-0853">WD repeat</keyword>
<feature type="chain" id="PRO_0000285349" description="Protein DSE1">
    <location>
        <begin position="1"/>
        <end position="656"/>
    </location>
</feature>
<feature type="repeat" description="WD 1">
    <location>
        <begin position="131"/>
        <end position="171"/>
    </location>
</feature>
<feature type="repeat" description="WD 2">
    <location>
        <begin position="198"/>
        <end position="237"/>
    </location>
</feature>
<feature type="repeat" description="WD 3">
    <location>
        <begin position="291"/>
        <end position="333"/>
    </location>
</feature>
<feature type="repeat" description="WD 4">
    <location>
        <begin position="336"/>
        <end position="373"/>
    </location>
</feature>
<evidence type="ECO:0000250" key="1"/>
<evidence type="ECO:0000305" key="2"/>